<gene>
    <name evidence="2" type="primary">EZR</name>
    <name evidence="2" type="synonym">VIL2</name>
</gene>
<organism>
    <name type="scientific">Mesocricetus auratus</name>
    <name type="common">Golden hamster</name>
    <dbReference type="NCBI Taxonomy" id="10036"/>
    <lineage>
        <taxon>Eukaryota</taxon>
        <taxon>Metazoa</taxon>
        <taxon>Chordata</taxon>
        <taxon>Craniata</taxon>
        <taxon>Vertebrata</taxon>
        <taxon>Euteleostomi</taxon>
        <taxon>Mammalia</taxon>
        <taxon>Eutheria</taxon>
        <taxon>Euarchontoglires</taxon>
        <taxon>Glires</taxon>
        <taxon>Rodentia</taxon>
        <taxon>Myomorpha</taxon>
        <taxon>Muroidea</taxon>
        <taxon>Cricetidae</taxon>
        <taxon>Cricetinae</taxon>
        <taxon>Mesocricetus</taxon>
    </lineage>
</organism>
<reference key="1">
    <citation type="journal article" date="2010" name="Asian J. Androl.">
        <title>Glucose-regulated protein precursor (GRP78) and tumor rejection antigen (GP96) are unique to hamster caput epididymal spermatozoa.</title>
        <authorList>
            <person name="Kameshwari D.B."/>
            <person name="Bhande S."/>
            <person name="Sundaram C.S."/>
            <person name="Kota V."/>
            <person name="Siva A.B."/>
            <person name="Shivaji S."/>
        </authorList>
    </citation>
    <scope>IDENTIFICATION BY MASS SPECTROMETRY</scope>
</reference>
<comment type="function">
    <text evidence="2">Probably involved in connections of major cytoskeletal structures to the plasma membrane. In epithelial cells, required for the formation of microvilli and membrane ruffles on the apical pole. Along with PLEKHG6, required for normal macropinocytosis (By similarity).</text>
</comment>
<comment type="activity regulation">
    <text evidence="1">A head-to-tail association, of the N-terminal and C-terminal halves results in a closed conformation (inactive form) which is incapable of actin or membrane-binding.</text>
</comment>
<comment type="subunit">
    <text evidence="2 3 4 5 6">Interacts with PALS1 and NHERF2. Found in a complex with EZR, PODXL and NHERF2. Interacts with MCC, PLEKHG6, PODXL, SCYL3/PACE1, NHERF1 and TMEM8B. Interacts (when phosphorylated) with FES/FPS. Interacts with dimeric S100P, the interaction may be activating through unmasking of F-actin binding sites. Identified in complexes that contain VIM, EZR, AHNAK, BFSP1, BFSP2, ANK2, PLEC, PRX and spectrin. Detected in a complex composed of at least EZR, AHNAK, PPL and PRX. Interacts with PDPN (via cytoplasmic domain); activates RHOA and promotes epithelial-mesenchymal transition. Interacts with SPN/CD43 cytoplasmic tail, CD44 and ICAM2 (By similarity). Interacts with CLIC5; may work together in a complex which also includes RDX and MYO6 to stabilize linkages between the plasma membrane and subjacent actin cytoskeleton at the base of stereocilia (By similarity).</text>
</comment>
<comment type="subcellular location">
    <subcellularLocation>
        <location evidence="2 5">Apical cell membrane</location>
        <topology evidence="2 5">Peripheral membrane protein</topology>
        <orientation evidence="2 5">Cytoplasmic side</orientation>
    </subcellularLocation>
    <subcellularLocation>
        <location evidence="2 5">Cell projection</location>
    </subcellularLocation>
    <subcellularLocation>
        <location evidence="2 5">Cell projection</location>
        <location evidence="2 5">Microvillus membrane</location>
        <topology evidence="2 5">Peripheral membrane protein</topology>
        <orientation evidence="2 5">Cytoplasmic side</orientation>
    </subcellularLocation>
    <subcellularLocation>
        <location evidence="2 5">Cell projection</location>
        <location evidence="2 5">Ruffle membrane</location>
        <topology evidence="2 5">Peripheral membrane protein</topology>
        <orientation evidence="2 5">Cytoplasmic side</orientation>
    </subcellularLocation>
    <subcellularLocation>
        <location evidence="2 5">Cytoplasm</location>
        <location evidence="2 5">Cell cortex</location>
    </subcellularLocation>
    <subcellularLocation>
        <location evidence="2 5">Cytoplasm</location>
        <location evidence="2 5">Cytoskeleton</location>
    </subcellularLocation>
    <subcellularLocation>
        <location evidence="3">Cell projection</location>
        <location evidence="3">Microvillus</location>
    </subcellularLocation>
    <text evidence="2 5">Localization to the apical membrane of parietal cells depends on the interaction with PALS1. Microvillar peripheral membrane protein (cytoplasmic side). Localizes to cell extensions and peripheral processes of astrocytes (By similarity).</text>
</comment>
<comment type="domain">
    <text evidence="2">The [IL]-x-C-x-x-[DE] motif is a proposed target motif for cysteine S-nitrosylation mediated by the iNOS-S100A8/A9 transnitrosylase complex.</text>
</comment>
<comment type="PTM">
    <text evidence="1">Phosphorylated by tyrosine-protein kinases. Phosphorylation by ROCK2 suppresses the head-to-tail association of the N-terminal and C-terminal halves resulting in an opened conformation which is capable of actin and membrane-binding (By similarity).</text>
</comment>
<comment type="PTM">
    <text evidence="2">S-nitrosylation is induced by interferon-gamma and oxidatively-modified low-densitity lipoprotein (LDL(ox)) possibly implicating the iNOS-S100A8/9 transnitrosylase complex.</text>
</comment>
<keyword id="KW-0007">Acetylation</keyword>
<keyword id="KW-1003">Cell membrane</keyword>
<keyword id="KW-0966">Cell projection</keyword>
<keyword id="KW-0133">Cell shape</keyword>
<keyword id="KW-0963">Cytoplasm</keyword>
<keyword id="KW-0206">Cytoskeleton</keyword>
<keyword id="KW-0472">Membrane</keyword>
<keyword id="KW-0597">Phosphoprotein</keyword>
<keyword id="KW-1185">Reference proteome</keyword>
<keyword id="KW-0702">S-nitrosylation</keyword>
<sequence>QLFDQVVKGFPTWLKLDKKENPVQFKIQVWHAEHRIGFPWSEIRNISFNDKKFVIKPIDKKAPDFVFYAPRRKPDTIEVQQMKLQDFEQKTK</sequence>
<proteinExistence type="evidence at protein level"/>
<dbReference type="SMR" id="P86232"/>
<dbReference type="Proteomes" id="UP000189706">
    <property type="component" value="Unplaced"/>
</dbReference>
<dbReference type="GO" id="GO:0016324">
    <property type="term" value="C:apical plasma membrane"/>
    <property type="evidence" value="ECO:0007669"/>
    <property type="project" value="UniProtKB-SubCell"/>
</dbReference>
<dbReference type="GO" id="GO:0016323">
    <property type="term" value="C:basolateral plasma membrane"/>
    <property type="evidence" value="ECO:0000250"/>
    <property type="project" value="UniProtKB"/>
</dbReference>
<dbReference type="GO" id="GO:0005938">
    <property type="term" value="C:cell cortex"/>
    <property type="evidence" value="ECO:0007669"/>
    <property type="project" value="UniProtKB-SubCell"/>
</dbReference>
<dbReference type="GO" id="GO:0005856">
    <property type="term" value="C:cytoskeleton"/>
    <property type="evidence" value="ECO:0007669"/>
    <property type="project" value="UniProtKB-SubCell"/>
</dbReference>
<dbReference type="GO" id="GO:0005902">
    <property type="term" value="C:microvillus"/>
    <property type="evidence" value="ECO:0000250"/>
    <property type="project" value="UniProtKB"/>
</dbReference>
<dbReference type="GO" id="GO:0031528">
    <property type="term" value="C:microvillus membrane"/>
    <property type="evidence" value="ECO:0000250"/>
    <property type="project" value="UniProtKB"/>
</dbReference>
<dbReference type="GO" id="GO:0032587">
    <property type="term" value="C:ruffle membrane"/>
    <property type="evidence" value="ECO:0007669"/>
    <property type="project" value="UniProtKB-SubCell"/>
</dbReference>
<dbReference type="GO" id="GO:0003779">
    <property type="term" value="F:actin binding"/>
    <property type="evidence" value="ECO:0007669"/>
    <property type="project" value="InterPro"/>
</dbReference>
<dbReference type="GO" id="GO:0008360">
    <property type="term" value="P:regulation of cell shape"/>
    <property type="evidence" value="ECO:0007669"/>
    <property type="project" value="UniProtKB-KW"/>
</dbReference>
<dbReference type="Gene3D" id="2.30.29.30">
    <property type="entry name" value="Pleckstrin-homology domain (PH domain)/Phosphotyrosine-binding domain (PTB)"/>
    <property type="match status" value="1"/>
</dbReference>
<dbReference type="InterPro" id="IPR011174">
    <property type="entry name" value="ERM"/>
</dbReference>
<dbReference type="InterPro" id="IPR018980">
    <property type="entry name" value="FERM_PH-like_C"/>
</dbReference>
<dbReference type="InterPro" id="IPR011993">
    <property type="entry name" value="PH-like_dom_sf"/>
</dbReference>
<dbReference type="PANTHER" id="PTHR23281">
    <property type="entry name" value="MERLIN/MOESIN/EZRIN/RADIXIN"/>
    <property type="match status" value="1"/>
</dbReference>
<dbReference type="Pfam" id="PF09380">
    <property type="entry name" value="FERM_C"/>
    <property type="match status" value="1"/>
</dbReference>
<dbReference type="SUPFAM" id="SSF50729">
    <property type="entry name" value="PH domain-like"/>
    <property type="match status" value="1"/>
</dbReference>
<protein>
    <recommendedName>
        <fullName evidence="2">Ezrin</fullName>
    </recommendedName>
    <alternativeName>
        <fullName evidence="2">Cytovillin</fullName>
    </alternativeName>
    <alternativeName>
        <fullName evidence="2">Villin-2</fullName>
    </alternativeName>
    <alternativeName>
        <fullName evidence="2">p81</fullName>
    </alternativeName>
</protein>
<name>EZRI_MESAU</name>
<evidence type="ECO:0000250" key="1"/>
<evidence type="ECO:0000250" key="2">
    <source>
        <dbReference type="UniProtKB" id="P15311"/>
    </source>
</evidence>
<evidence type="ECO:0000250" key="3">
    <source>
        <dbReference type="UniProtKB" id="P26040"/>
    </source>
</evidence>
<evidence type="ECO:0000250" key="4">
    <source>
        <dbReference type="UniProtKB" id="P31976"/>
    </source>
</evidence>
<evidence type="ECO:0000250" key="5">
    <source>
        <dbReference type="UniProtKB" id="P31977"/>
    </source>
</evidence>
<evidence type="ECO:0000250" key="6">
    <source>
        <dbReference type="UniProtKB" id="Q8HZQ5"/>
    </source>
</evidence>
<evidence type="ECO:0000255" key="7">
    <source>
        <dbReference type="PROSITE-ProRule" id="PRU00084"/>
    </source>
</evidence>
<evidence type="ECO:0000305" key="8"/>
<accession>P86232</accession>
<feature type="chain" id="PRO_0000394739" description="Ezrin">
    <location>
        <begin position="1" status="less than"/>
        <end position="92" status="greater than"/>
    </location>
</feature>
<feature type="domain" description="FERM" evidence="7">
    <location>
        <begin position="1" status="less than"/>
        <end position="72"/>
    </location>
</feature>
<feature type="region of interest" description="Interaction with SCYL3" evidence="2">
    <location>
        <begin position="42"/>
        <end position="92" status="greater than"/>
    </location>
</feature>
<feature type="modified residue" description="N6-acetyllysine" evidence="2">
    <location>
        <position position="15"/>
    </location>
</feature>
<feature type="non-consecutive residues" evidence="8">
    <location>
        <begin position="8"/>
        <end position="9"/>
    </location>
</feature>
<feature type="non-consecutive residues" evidence="8">
    <location>
        <begin position="18"/>
        <end position="19"/>
    </location>
</feature>
<feature type="non-consecutive residues" evidence="8">
    <location>
        <begin position="26"/>
        <end position="27"/>
    </location>
</feature>
<feature type="non-consecutive residues" evidence="8">
    <location>
        <begin position="35"/>
        <end position="36"/>
    </location>
</feature>
<feature type="non-consecutive residues" evidence="8">
    <location>
        <begin position="71"/>
        <end position="72"/>
    </location>
</feature>
<feature type="non-consecutive residues" evidence="8">
    <location>
        <begin position="83"/>
        <end position="84"/>
    </location>
</feature>
<feature type="non-terminal residue">
    <location>
        <position position="1"/>
    </location>
</feature>
<feature type="non-terminal residue">
    <location>
        <position position="92"/>
    </location>
</feature>